<gene>
    <name evidence="1" type="primary">petL</name>
</gene>
<protein>
    <recommendedName>
        <fullName evidence="1">Cytochrome b6-f complex subunit 6</fullName>
    </recommendedName>
    <alternativeName>
        <fullName evidence="1">Cytochrome b6-f complex subunit PetL</fullName>
    </alternativeName>
    <alternativeName>
        <fullName evidence="1">Cytochrome b6-f complex subunit VI</fullName>
    </alternativeName>
</protein>
<geneLocation type="chloroplast"/>
<accession>Q3C1L1</accession>
<dbReference type="EMBL" id="AB237912">
    <property type="protein sequence ID" value="BAE46672.1"/>
    <property type="molecule type" value="Genomic_DNA"/>
</dbReference>
<dbReference type="RefSeq" id="YP_358697.1">
    <property type="nucleotide sequence ID" value="NC_007500.1"/>
</dbReference>
<dbReference type="SMR" id="Q3C1L1"/>
<dbReference type="GeneID" id="3735074"/>
<dbReference type="KEGG" id="nsy:3735074"/>
<dbReference type="OrthoDB" id="25243at4085"/>
<dbReference type="Proteomes" id="UP000189701">
    <property type="component" value="Chloroplast Pltd"/>
</dbReference>
<dbReference type="GO" id="GO:0009535">
    <property type="term" value="C:chloroplast thylakoid membrane"/>
    <property type="evidence" value="ECO:0007669"/>
    <property type="project" value="UniProtKB-SubCell"/>
</dbReference>
<dbReference type="GO" id="GO:0009512">
    <property type="term" value="C:cytochrome b6f complex"/>
    <property type="evidence" value="ECO:0007669"/>
    <property type="project" value="InterPro"/>
</dbReference>
<dbReference type="GO" id="GO:0045158">
    <property type="term" value="F:electron transporter, transferring electrons within cytochrome b6/f complex of photosystem II activity"/>
    <property type="evidence" value="ECO:0007669"/>
    <property type="project" value="UniProtKB-UniRule"/>
</dbReference>
<dbReference type="GO" id="GO:0015979">
    <property type="term" value="P:photosynthesis"/>
    <property type="evidence" value="ECO:0007669"/>
    <property type="project" value="UniProtKB-KW"/>
</dbReference>
<dbReference type="HAMAP" id="MF_00433">
    <property type="entry name" value="Cytb6_f_PetL"/>
    <property type="match status" value="1"/>
</dbReference>
<dbReference type="InterPro" id="IPR007802">
    <property type="entry name" value="Cyt_b6/f_cplx_su6"/>
</dbReference>
<dbReference type="PANTHER" id="PTHR37266">
    <property type="entry name" value="CYTOCHROME B6-F COMPLEX SUBUNIT 6"/>
    <property type="match status" value="1"/>
</dbReference>
<dbReference type="PANTHER" id="PTHR37266:SF1">
    <property type="entry name" value="CYTOCHROME B6-F COMPLEX SUBUNIT 6"/>
    <property type="match status" value="1"/>
</dbReference>
<dbReference type="Pfam" id="PF05115">
    <property type="entry name" value="PetL"/>
    <property type="match status" value="1"/>
</dbReference>
<dbReference type="SUPFAM" id="SSF103436">
    <property type="entry name" value="PetL subunit of the cytochrome b6f complex"/>
    <property type="match status" value="1"/>
</dbReference>
<comment type="function">
    <text evidence="1">Component of the cytochrome b6-f complex, which mediates electron transfer between photosystem II (PSII) and photosystem I (PSI), cyclic electron flow around PSI, and state transitions. PetL is important for photoautotrophic growth as well as for electron transfer efficiency and stability of the cytochrome b6-f complex.</text>
</comment>
<comment type="subunit">
    <text evidence="1">The 4 large subunits of the cytochrome b6-f complex are cytochrome b6, subunit IV (17 kDa polypeptide, PetD), cytochrome f and the Rieske protein, while the 4 small subunits are PetG, PetL, PetM and PetN. The complex functions as a dimer.</text>
</comment>
<comment type="subcellular location">
    <subcellularLocation>
        <location evidence="1">Plastid</location>
        <location evidence="1">Chloroplast thylakoid membrane</location>
        <topology evidence="1">Single-pass membrane protein</topology>
    </subcellularLocation>
</comment>
<comment type="similarity">
    <text evidence="1">Belongs to the PetL family.</text>
</comment>
<keyword id="KW-0150">Chloroplast</keyword>
<keyword id="KW-0249">Electron transport</keyword>
<keyword id="KW-0472">Membrane</keyword>
<keyword id="KW-0602">Photosynthesis</keyword>
<keyword id="KW-0934">Plastid</keyword>
<keyword id="KW-1185">Reference proteome</keyword>
<keyword id="KW-0793">Thylakoid</keyword>
<keyword id="KW-0812">Transmembrane</keyword>
<keyword id="KW-1133">Transmembrane helix</keyword>
<keyword id="KW-0813">Transport</keyword>
<name>PETL_NICSY</name>
<proteinExistence type="inferred from homology"/>
<reference key="1">
    <citation type="journal article" date="2006" name="Mol. Genet. Genomics">
        <title>The chloroplast genome of Nicotiana sylvestris and Nicotiana tomentosiformis: complete sequencing confirms that the Nicotiana sylvestris progenitor is the maternal genome donor of Nicotiana tabacum.</title>
        <authorList>
            <person name="Yukawa M."/>
            <person name="Tsudzuki T."/>
            <person name="Sugiura M."/>
        </authorList>
    </citation>
    <scope>NUCLEOTIDE SEQUENCE [LARGE SCALE GENOMIC DNA]</scope>
</reference>
<organism>
    <name type="scientific">Nicotiana sylvestris</name>
    <name type="common">Wood tobacco</name>
    <name type="synonym">South American tobacco</name>
    <dbReference type="NCBI Taxonomy" id="4096"/>
    <lineage>
        <taxon>Eukaryota</taxon>
        <taxon>Viridiplantae</taxon>
        <taxon>Streptophyta</taxon>
        <taxon>Embryophyta</taxon>
        <taxon>Tracheophyta</taxon>
        <taxon>Spermatophyta</taxon>
        <taxon>Magnoliopsida</taxon>
        <taxon>eudicotyledons</taxon>
        <taxon>Gunneridae</taxon>
        <taxon>Pentapetalae</taxon>
        <taxon>asterids</taxon>
        <taxon>lamiids</taxon>
        <taxon>Solanales</taxon>
        <taxon>Solanaceae</taxon>
        <taxon>Nicotianoideae</taxon>
        <taxon>Nicotianeae</taxon>
        <taxon>Nicotiana</taxon>
    </lineage>
</organism>
<evidence type="ECO:0000255" key="1">
    <source>
        <dbReference type="HAMAP-Rule" id="MF_00433"/>
    </source>
</evidence>
<feature type="chain" id="PRO_0000233679" description="Cytochrome b6-f complex subunit 6">
    <location>
        <begin position="1"/>
        <end position="31"/>
    </location>
</feature>
<feature type="transmembrane region" description="Helical" evidence="1">
    <location>
        <begin position="4"/>
        <end position="24"/>
    </location>
</feature>
<sequence length="31" mass="3389">MLTITSYFGFLLAALTITSALFIGLSKIRLI</sequence>